<feature type="chain" id="PRO_0000238386" description="ATP synthase subunit alpha">
    <location>
        <begin position="1"/>
        <end position="547"/>
    </location>
</feature>
<feature type="binding site" evidence="1">
    <location>
        <begin position="173"/>
        <end position="180"/>
    </location>
    <ligand>
        <name>ATP</name>
        <dbReference type="ChEBI" id="CHEBI:30616"/>
    </ligand>
</feature>
<feature type="site" description="Required for activity" evidence="1">
    <location>
        <position position="374"/>
    </location>
</feature>
<comment type="function">
    <text evidence="1">Produces ATP from ADP in the presence of a proton gradient across the membrane. The alpha chain is a regulatory subunit.</text>
</comment>
<comment type="catalytic activity">
    <reaction evidence="1">
        <text>ATP + H2O + 4 H(+)(in) = ADP + phosphate + 5 H(+)(out)</text>
        <dbReference type="Rhea" id="RHEA:57720"/>
        <dbReference type="ChEBI" id="CHEBI:15377"/>
        <dbReference type="ChEBI" id="CHEBI:15378"/>
        <dbReference type="ChEBI" id="CHEBI:30616"/>
        <dbReference type="ChEBI" id="CHEBI:43474"/>
        <dbReference type="ChEBI" id="CHEBI:456216"/>
        <dbReference type="EC" id="7.1.2.2"/>
    </reaction>
</comment>
<comment type="subunit">
    <text evidence="1">F-type ATPases have 2 components, CF(1) - the catalytic core - and CF(0) - the membrane proton channel. CF(1) has five subunits: alpha(3), beta(3), gamma(1), delta(1), epsilon(1). CF(0) has three main subunits: a(1), b(2) and c(9-12). The alpha and beta chains form an alternating ring which encloses part of the gamma chain. CF(1) is attached to CF(0) by a central stalk formed by the gamma and epsilon chains, while a peripheral stalk is formed by the delta and b chains.</text>
</comment>
<comment type="subcellular location">
    <subcellularLocation>
        <location evidence="1">Cell membrane</location>
        <topology evidence="1">Peripheral membrane protein</topology>
    </subcellularLocation>
</comment>
<comment type="similarity">
    <text evidence="1">Belongs to the ATPase alpha/beta chains family.</text>
</comment>
<proteinExistence type="inferred from homology"/>
<evidence type="ECO:0000255" key="1">
    <source>
        <dbReference type="HAMAP-Rule" id="MF_01346"/>
    </source>
</evidence>
<name>ATPA_THEFY</name>
<organism>
    <name type="scientific">Thermobifida fusca (strain YX)</name>
    <dbReference type="NCBI Taxonomy" id="269800"/>
    <lineage>
        <taxon>Bacteria</taxon>
        <taxon>Bacillati</taxon>
        <taxon>Actinomycetota</taxon>
        <taxon>Actinomycetes</taxon>
        <taxon>Streptosporangiales</taxon>
        <taxon>Nocardiopsidaceae</taxon>
        <taxon>Thermobifida</taxon>
    </lineage>
</organism>
<accession>Q47M80</accession>
<sequence>MAELTIRPEEIRDALQRFVQSYEPDAAAREEIGTVTYSGDGIARVSGLPSAMANELLEFEDGTQGIAQNLEIGEIGVVVLGDFTNIAEGQTVRRTGQVLSVPVGDAYLGRVVDPLGRPIDGKGEIETTERRELELQAATVMQRKPVHEPLQTGIKAIDALTPIGRGQRQLIIGDRQTGKTAVCIDTIINQKANWESGDPNKQVRCIYVAVGQKGSTIAGVRAALEEAGAMEYTTIVASPASDPAGFKYIAPYTGSAIGQHWMYQGKHVLIVFDDLTKQAEAYRAVSLLLRRPPGREAYPGDVFYLHSRLLERCAKLSDEMGAGSLTGLPIIETKANDVSAYIPTNVISITDGQVFLESDLFNQGQRPAINVGISVSRVGGAAQTKAMKKVVGSLRVGLAQYRDLEAFAAFGSDLDAASKAQLERGARLMELLKQGQYSPFPMEEEVVSIWAGTTGHLDDVPVEDIRRFESEFLAYLRREHSKILDVIRETEDFGDDTAEALTDAIKEFKKTFQTSDGTILGTEAPAEALDESEVGQETIKVAKTSGK</sequence>
<protein>
    <recommendedName>
        <fullName evidence="1">ATP synthase subunit alpha</fullName>
        <ecNumber evidence="1">7.1.2.2</ecNumber>
    </recommendedName>
    <alternativeName>
        <fullName evidence="1">ATP synthase F1 sector subunit alpha</fullName>
    </alternativeName>
    <alternativeName>
        <fullName evidence="1">F-ATPase subunit alpha</fullName>
    </alternativeName>
</protein>
<keyword id="KW-0066">ATP synthesis</keyword>
<keyword id="KW-0067">ATP-binding</keyword>
<keyword id="KW-1003">Cell membrane</keyword>
<keyword id="KW-0139">CF(1)</keyword>
<keyword id="KW-0375">Hydrogen ion transport</keyword>
<keyword id="KW-0406">Ion transport</keyword>
<keyword id="KW-0472">Membrane</keyword>
<keyword id="KW-0547">Nucleotide-binding</keyword>
<keyword id="KW-1278">Translocase</keyword>
<keyword id="KW-0813">Transport</keyword>
<reference key="1">
    <citation type="journal article" date="2007" name="J. Bacteriol.">
        <title>Genome sequence and analysis of the soil cellulolytic actinomycete Thermobifida fusca YX.</title>
        <authorList>
            <person name="Lykidis A."/>
            <person name="Mavromatis K."/>
            <person name="Ivanova N."/>
            <person name="Anderson I."/>
            <person name="Land M."/>
            <person name="DiBartolo G."/>
            <person name="Martinez M."/>
            <person name="Lapidus A."/>
            <person name="Lucas S."/>
            <person name="Copeland A."/>
            <person name="Richardson P."/>
            <person name="Wilson D.B."/>
            <person name="Kyrpides N."/>
        </authorList>
    </citation>
    <scope>NUCLEOTIDE SEQUENCE [LARGE SCALE GENOMIC DNA]</scope>
    <source>
        <strain>YX</strain>
    </source>
</reference>
<gene>
    <name evidence="1" type="primary">atpA</name>
    <name type="ordered locus">Tfu_2409</name>
</gene>
<dbReference type="EC" id="7.1.2.2" evidence="1"/>
<dbReference type="EMBL" id="CP000088">
    <property type="protein sequence ID" value="AAZ56442.1"/>
    <property type="molecule type" value="Genomic_DNA"/>
</dbReference>
<dbReference type="RefSeq" id="WP_011292832.1">
    <property type="nucleotide sequence ID" value="NC_007333.1"/>
</dbReference>
<dbReference type="SMR" id="Q47M80"/>
<dbReference type="STRING" id="269800.Tfu_2409"/>
<dbReference type="KEGG" id="tfu:Tfu_2409"/>
<dbReference type="eggNOG" id="COG0056">
    <property type="taxonomic scope" value="Bacteria"/>
</dbReference>
<dbReference type="HOGENOM" id="CLU_010091_2_1_11"/>
<dbReference type="OrthoDB" id="9803053at2"/>
<dbReference type="GO" id="GO:0005886">
    <property type="term" value="C:plasma membrane"/>
    <property type="evidence" value="ECO:0007669"/>
    <property type="project" value="UniProtKB-SubCell"/>
</dbReference>
<dbReference type="GO" id="GO:0045259">
    <property type="term" value="C:proton-transporting ATP synthase complex"/>
    <property type="evidence" value="ECO:0007669"/>
    <property type="project" value="UniProtKB-KW"/>
</dbReference>
<dbReference type="GO" id="GO:0043531">
    <property type="term" value="F:ADP binding"/>
    <property type="evidence" value="ECO:0007669"/>
    <property type="project" value="TreeGrafter"/>
</dbReference>
<dbReference type="GO" id="GO:0005524">
    <property type="term" value="F:ATP binding"/>
    <property type="evidence" value="ECO:0007669"/>
    <property type="project" value="UniProtKB-UniRule"/>
</dbReference>
<dbReference type="GO" id="GO:0046933">
    <property type="term" value="F:proton-transporting ATP synthase activity, rotational mechanism"/>
    <property type="evidence" value="ECO:0007669"/>
    <property type="project" value="UniProtKB-UniRule"/>
</dbReference>
<dbReference type="CDD" id="cd18113">
    <property type="entry name" value="ATP-synt_F1_alpha_C"/>
    <property type="match status" value="1"/>
</dbReference>
<dbReference type="CDD" id="cd18116">
    <property type="entry name" value="ATP-synt_F1_alpha_N"/>
    <property type="match status" value="1"/>
</dbReference>
<dbReference type="CDD" id="cd01132">
    <property type="entry name" value="F1-ATPase_alpha_CD"/>
    <property type="match status" value="1"/>
</dbReference>
<dbReference type="FunFam" id="1.20.150.20:FF:000001">
    <property type="entry name" value="ATP synthase subunit alpha"/>
    <property type="match status" value="1"/>
</dbReference>
<dbReference type="FunFam" id="3.40.50.300:FF:000002">
    <property type="entry name" value="ATP synthase subunit alpha"/>
    <property type="match status" value="1"/>
</dbReference>
<dbReference type="Gene3D" id="2.40.30.20">
    <property type="match status" value="1"/>
</dbReference>
<dbReference type="Gene3D" id="1.20.150.20">
    <property type="entry name" value="ATP synthase alpha/beta chain, C-terminal domain"/>
    <property type="match status" value="1"/>
</dbReference>
<dbReference type="Gene3D" id="3.40.50.300">
    <property type="entry name" value="P-loop containing nucleotide triphosphate hydrolases"/>
    <property type="match status" value="1"/>
</dbReference>
<dbReference type="HAMAP" id="MF_01346">
    <property type="entry name" value="ATP_synth_alpha_bact"/>
    <property type="match status" value="1"/>
</dbReference>
<dbReference type="InterPro" id="IPR023366">
    <property type="entry name" value="ATP_synth_asu-like_sf"/>
</dbReference>
<dbReference type="InterPro" id="IPR000793">
    <property type="entry name" value="ATP_synth_asu_C"/>
</dbReference>
<dbReference type="InterPro" id="IPR038376">
    <property type="entry name" value="ATP_synth_asu_C_sf"/>
</dbReference>
<dbReference type="InterPro" id="IPR033732">
    <property type="entry name" value="ATP_synth_F1_a_nt-bd_dom"/>
</dbReference>
<dbReference type="InterPro" id="IPR005294">
    <property type="entry name" value="ATP_synth_F1_asu"/>
</dbReference>
<dbReference type="InterPro" id="IPR020003">
    <property type="entry name" value="ATPase_a/bsu_AS"/>
</dbReference>
<dbReference type="InterPro" id="IPR004100">
    <property type="entry name" value="ATPase_F1/V1/A1_a/bsu_N"/>
</dbReference>
<dbReference type="InterPro" id="IPR036121">
    <property type="entry name" value="ATPase_F1/V1/A1_a/bsu_N_sf"/>
</dbReference>
<dbReference type="InterPro" id="IPR000194">
    <property type="entry name" value="ATPase_F1/V1/A1_a/bsu_nucl-bd"/>
</dbReference>
<dbReference type="InterPro" id="IPR027417">
    <property type="entry name" value="P-loop_NTPase"/>
</dbReference>
<dbReference type="NCBIfam" id="TIGR00962">
    <property type="entry name" value="atpA"/>
    <property type="match status" value="1"/>
</dbReference>
<dbReference type="NCBIfam" id="NF009884">
    <property type="entry name" value="PRK13343.1"/>
    <property type="match status" value="1"/>
</dbReference>
<dbReference type="PANTHER" id="PTHR48082">
    <property type="entry name" value="ATP SYNTHASE SUBUNIT ALPHA, MITOCHONDRIAL"/>
    <property type="match status" value="1"/>
</dbReference>
<dbReference type="PANTHER" id="PTHR48082:SF2">
    <property type="entry name" value="ATP SYNTHASE SUBUNIT ALPHA, MITOCHONDRIAL"/>
    <property type="match status" value="1"/>
</dbReference>
<dbReference type="Pfam" id="PF00006">
    <property type="entry name" value="ATP-synt_ab"/>
    <property type="match status" value="1"/>
</dbReference>
<dbReference type="Pfam" id="PF00306">
    <property type="entry name" value="ATP-synt_ab_C"/>
    <property type="match status" value="1"/>
</dbReference>
<dbReference type="Pfam" id="PF02874">
    <property type="entry name" value="ATP-synt_ab_N"/>
    <property type="match status" value="1"/>
</dbReference>
<dbReference type="PIRSF" id="PIRSF039088">
    <property type="entry name" value="F_ATPase_subunit_alpha"/>
    <property type="match status" value="1"/>
</dbReference>
<dbReference type="SUPFAM" id="SSF47917">
    <property type="entry name" value="C-terminal domain of alpha and beta subunits of F1 ATP synthase"/>
    <property type="match status" value="1"/>
</dbReference>
<dbReference type="SUPFAM" id="SSF50615">
    <property type="entry name" value="N-terminal domain of alpha and beta subunits of F1 ATP synthase"/>
    <property type="match status" value="1"/>
</dbReference>
<dbReference type="SUPFAM" id="SSF52540">
    <property type="entry name" value="P-loop containing nucleoside triphosphate hydrolases"/>
    <property type="match status" value="1"/>
</dbReference>
<dbReference type="PROSITE" id="PS00152">
    <property type="entry name" value="ATPASE_ALPHA_BETA"/>
    <property type="match status" value="1"/>
</dbReference>